<dbReference type="EC" id="2.7.7.77" evidence="1"/>
<dbReference type="EMBL" id="CU234118">
    <property type="protein sequence ID" value="CAL79503.1"/>
    <property type="molecule type" value="Genomic_DNA"/>
</dbReference>
<dbReference type="RefSeq" id="WP_012029405.1">
    <property type="nucleotide sequence ID" value="NC_009445.1"/>
</dbReference>
<dbReference type="SMR" id="A4Z027"/>
<dbReference type="STRING" id="114615.BRADO5839"/>
<dbReference type="KEGG" id="bra:BRADO5839"/>
<dbReference type="eggNOG" id="COG0746">
    <property type="taxonomic scope" value="Bacteria"/>
</dbReference>
<dbReference type="HOGENOM" id="CLU_055597_5_0_5"/>
<dbReference type="OrthoDB" id="9788394at2"/>
<dbReference type="Proteomes" id="UP000001994">
    <property type="component" value="Chromosome"/>
</dbReference>
<dbReference type="GO" id="GO:0005737">
    <property type="term" value="C:cytoplasm"/>
    <property type="evidence" value="ECO:0007669"/>
    <property type="project" value="UniProtKB-SubCell"/>
</dbReference>
<dbReference type="GO" id="GO:0005525">
    <property type="term" value="F:GTP binding"/>
    <property type="evidence" value="ECO:0007669"/>
    <property type="project" value="UniProtKB-UniRule"/>
</dbReference>
<dbReference type="GO" id="GO:0046872">
    <property type="term" value="F:metal ion binding"/>
    <property type="evidence" value="ECO:0007669"/>
    <property type="project" value="UniProtKB-KW"/>
</dbReference>
<dbReference type="GO" id="GO:0061603">
    <property type="term" value="F:molybdenum cofactor guanylyltransferase activity"/>
    <property type="evidence" value="ECO:0007669"/>
    <property type="project" value="UniProtKB-EC"/>
</dbReference>
<dbReference type="GO" id="GO:1902758">
    <property type="term" value="P:bis(molybdopterin guanine dinucleotide)molybdenum biosynthetic process"/>
    <property type="evidence" value="ECO:0007669"/>
    <property type="project" value="TreeGrafter"/>
</dbReference>
<dbReference type="CDD" id="cd02503">
    <property type="entry name" value="MobA"/>
    <property type="match status" value="1"/>
</dbReference>
<dbReference type="Gene3D" id="3.90.550.10">
    <property type="entry name" value="Spore Coat Polysaccharide Biosynthesis Protein SpsA, Chain A"/>
    <property type="match status" value="1"/>
</dbReference>
<dbReference type="HAMAP" id="MF_00316">
    <property type="entry name" value="MobA"/>
    <property type="match status" value="1"/>
</dbReference>
<dbReference type="InterPro" id="IPR025877">
    <property type="entry name" value="MobA-like_NTP_Trfase"/>
</dbReference>
<dbReference type="InterPro" id="IPR013482">
    <property type="entry name" value="Molybde_CF_guanTrfase"/>
</dbReference>
<dbReference type="InterPro" id="IPR029044">
    <property type="entry name" value="Nucleotide-diphossugar_trans"/>
</dbReference>
<dbReference type="NCBIfam" id="TIGR02665">
    <property type="entry name" value="molyb_mobA"/>
    <property type="match status" value="1"/>
</dbReference>
<dbReference type="PANTHER" id="PTHR19136">
    <property type="entry name" value="MOLYBDENUM COFACTOR GUANYLYLTRANSFERASE"/>
    <property type="match status" value="1"/>
</dbReference>
<dbReference type="PANTHER" id="PTHR19136:SF81">
    <property type="entry name" value="MOLYBDENUM COFACTOR GUANYLYLTRANSFERASE"/>
    <property type="match status" value="1"/>
</dbReference>
<dbReference type="Pfam" id="PF12804">
    <property type="entry name" value="NTP_transf_3"/>
    <property type="match status" value="1"/>
</dbReference>
<dbReference type="SUPFAM" id="SSF53448">
    <property type="entry name" value="Nucleotide-diphospho-sugar transferases"/>
    <property type="match status" value="1"/>
</dbReference>
<evidence type="ECO:0000255" key="1">
    <source>
        <dbReference type="HAMAP-Rule" id="MF_00316"/>
    </source>
</evidence>
<accession>A4Z027</accession>
<comment type="function">
    <text evidence="1">Transfers a GMP moiety from GTP to Mo-molybdopterin (Mo-MPT) cofactor (Moco or molybdenum cofactor) to form Mo-molybdopterin guanine dinucleotide (Mo-MGD) cofactor.</text>
</comment>
<comment type="catalytic activity">
    <reaction evidence="1">
        <text>Mo-molybdopterin + GTP + H(+) = Mo-molybdopterin guanine dinucleotide + diphosphate</text>
        <dbReference type="Rhea" id="RHEA:34243"/>
        <dbReference type="ChEBI" id="CHEBI:15378"/>
        <dbReference type="ChEBI" id="CHEBI:33019"/>
        <dbReference type="ChEBI" id="CHEBI:37565"/>
        <dbReference type="ChEBI" id="CHEBI:71302"/>
        <dbReference type="ChEBI" id="CHEBI:71310"/>
        <dbReference type="EC" id="2.7.7.77"/>
    </reaction>
</comment>
<comment type="cofactor">
    <cofactor evidence="1">
        <name>Mg(2+)</name>
        <dbReference type="ChEBI" id="CHEBI:18420"/>
    </cofactor>
</comment>
<comment type="subunit">
    <text evidence="1">Monomer.</text>
</comment>
<comment type="subcellular location">
    <subcellularLocation>
        <location evidence="1">Cytoplasm</location>
    </subcellularLocation>
</comment>
<comment type="domain">
    <text evidence="1">The N-terminal domain determines nucleotide recognition and specific binding, while the C-terminal domain determines the specific binding to the target protein.</text>
</comment>
<comment type="similarity">
    <text evidence="1">Belongs to the MobA family.</text>
</comment>
<name>MOBA_BRASO</name>
<keyword id="KW-0963">Cytoplasm</keyword>
<keyword id="KW-0342">GTP-binding</keyword>
<keyword id="KW-0460">Magnesium</keyword>
<keyword id="KW-0479">Metal-binding</keyword>
<keyword id="KW-0501">Molybdenum cofactor biosynthesis</keyword>
<keyword id="KW-0547">Nucleotide-binding</keyword>
<keyword id="KW-1185">Reference proteome</keyword>
<keyword id="KW-0808">Transferase</keyword>
<feature type="chain" id="PRO_1000019104" description="Molybdenum cofactor guanylyltransferase">
    <location>
        <begin position="1"/>
        <end position="212"/>
    </location>
</feature>
<feature type="binding site" evidence="1">
    <location>
        <begin position="14"/>
        <end position="16"/>
    </location>
    <ligand>
        <name>GTP</name>
        <dbReference type="ChEBI" id="CHEBI:37565"/>
    </ligand>
</feature>
<feature type="binding site" evidence="1">
    <location>
        <position position="27"/>
    </location>
    <ligand>
        <name>GTP</name>
        <dbReference type="ChEBI" id="CHEBI:37565"/>
    </ligand>
</feature>
<feature type="binding site" evidence="1">
    <location>
        <position position="55"/>
    </location>
    <ligand>
        <name>GTP</name>
        <dbReference type="ChEBI" id="CHEBI:37565"/>
    </ligand>
</feature>
<feature type="binding site" evidence="1">
    <location>
        <position position="73"/>
    </location>
    <ligand>
        <name>GTP</name>
        <dbReference type="ChEBI" id="CHEBI:37565"/>
    </ligand>
</feature>
<feature type="binding site" evidence="1">
    <location>
        <position position="108"/>
    </location>
    <ligand>
        <name>GTP</name>
        <dbReference type="ChEBI" id="CHEBI:37565"/>
    </ligand>
</feature>
<feature type="binding site" evidence="1">
    <location>
        <position position="108"/>
    </location>
    <ligand>
        <name>Mg(2+)</name>
        <dbReference type="ChEBI" id="CHEBI:18420"/>
    </ligand>
</feature>
<protein>
    <recommendedName>
        <fullName evidence="1">Molybdenum cofactor guanylyltransferase</fullName>
        <shortName evidence="1">MoCo guanylyltransferase</shortName>
        <ecNumber evidence="1">2.7.7.77</ecNumber>
    </recommendedName>
    <alternativeName>
        <fullName evidence="1">GTP:molybdopterin guanylyltransferase</fullName>
    </alternativeName>
    <alternativeName>
        <fullName evidence="1">Mo-MPT guanylyltransferase</fullName>
    </alternativeName>
    <alternativeName>
        <fullName evidence="1">Molybdopterin guanylyltransferase</fullName>
    </alternativeName>
    <alternativeName>
        <fullName evidence="1">Molybdopterin-guanine dinucleotide synthase</fullName>
        <shortName evidence="1">MGD synthase</shortName>
    </alternativeName>
</protein>
<gene>
    <name evidence="1" type="primary">mobA</name>
    <name type="ordered locus">BRADO5839</name>
</gene>
<proteinExistence type="inferred from homology"/>
<sequence>MTSSTTTAVPGLLLAGGLARRMGGGDKPMRVIAGRTLLAHVITRLAPQCEPLVLNANGDPARFAAYGLTVVPDDVPGFAGPLAGILAGLDWVASHRPAAQRMISVAADCPFLPRDLVARLTAACMAEDTDLALAASGGHTHPVIGLWPVRLREDLRHALVSEDIRKVTRFTARYKVATVTWPVVPRDPFFNANTAEDLAEAERLAAMEDRDA</sequence>
<reference key="1">
    <citation type="journal article" date="2007" name="Science">
        <title>Legumes symbioses: absence of nod genes in photosynthetic bradyrhizobia.</title>
        <authorList>
            <person name="Giraud E."/>
            <person name="Moulin L."/>
            <person name="Vallenet D."/>
            <person name="Barbe V."/>
            <person name="Cytryn E."/>
            <person name="Avarre J.-C."/>
            <person name="Jaubert M."/>
            <person name="Simon D."/>
            <person name="Cartieaux F."/>
            <person name="Prin Y."/>
            <person name="Bena G."/>
            <person name="Hannibal L."/>
            <person name="Fardoux J."/>
            <person name="Kojadinovic M."/>
            <person name="Vuillet L."/>
            <person name="Lajus A."/>
            <person name="Cruveiller S."/>
            <person name="Rouy Z."/>
            <person name="Mangenot S."/>
            <person name="Segurens B."/>
            <person name="Dossat C."/>
            <person name="Franck W.L."/>
            <person name="Chang W.-S."/>
            <person name="Saunders E."/>
            <person name="Bruce D."/>
            <person name="Richardson P."/>
            <person name="Normand P."/>
            <person name="Dreyfus B."/>
            <person name="Pignol D."/>
            <person name="Stacey G."/>
            <person name="Emerich D."/>
            <person name="Vermeglio A."/>
            <person name="Medigue C."/>
            <person name="Sadowsky M."/>
        </authorList>
    </citation>
    <scope>NUCLEOTIDE SEQUENCE [LARGE SCALE GENOMIC DNA]</scope>
    <source>
        <strain>ORS 278</strain>
    </source>
</reference>
<organism>
    <name type="scientific">Bradyrhizobium sp. (strain ORS 278)</name>
    <dbReference type="NCBI Taxonomy" id="114615"/>
    <lineage>
        <taxon>Bacteria</taxon>
        <taxon>Pseudomonadati</taxon>
        <taxon>Pseudomonadota</taxon>
        <taxon>Alphaproteobacteria</taxon>
        <taxon>Hyphomicrobiales</taxon>
        <taxon>Nitrobacteraceae</taxon>
        <taxon>Bradyrhizobium</taxon>
    </lineage>
</organism>